<accession>B3CTD7</accession>
<name>RECO_ORITI</name>
<proteinExistence type="inferred from homology"/>
<comment type="function">
    <text evidence="1">Involved in DNA repair and RecF pathway recombination.</text>
</comment>
<comment type="similarity">
    <text evidence="1">Belongs to the RecO family.</text>
</comment>
<reference key="1">
    <citation type="journal article" date="2008" name="DNA Res.">
        <title>The whole-genome sequencing of the obligate intracellular bacterium Orientia tsutsugamushi revealed massive gene amplification during reductive genome evolution.</title>
        <authorList>
            <person name="Nakayama K."/>
            <person name="Yamashita A."/>
            <person name="Kurokawa K."/>
            <person name="Morimoto T."/>
            <person name="Ogawa M."/>
            <person name="Fukuhara M."/>
            <person name="Urakami H."/>
            <person name="Ohnishi M."/>
            <person name="Uchiyama I."/>
            <person name="Ogura Y."/>
            <person name="Ooka T."/>
            <person name="Oshima K."/>
            <person name="Tamura A."/>
            <person name="Hattori M."/>
            <person name="Hayashi T."/>
        </authorList>
    </citation>
    <scope>NUCLEOTIDE SEQUENCE [LARGE SCALE GENOMIC DNA]</scope>
    <source>
        <strain>Ikeda</strain>
    </source>
</reference>
<gene>
    <name evidence="1" type="primary">recO</name>
    <name type="ordered locus">OTT_1176</name>
</gene>
<sequence length="241" mass="28009">MNFRDKAIILKKRNIKENLAIVTVLTQSYGIYSGIIKDLHSKKNTIIYQIGNIVDFCWSARLDEHLGTINCELVKSYSYLIMSNKRNLLYTHSLIELTLMSFKERELHANLFEKWLENLESINTGNINVKNYINFELLILKEAGYRLNLDRCGVTNCTQNLIYVSPKSGQAISATVGEPYKHKLLLLPKFLVHNNCEPEDIYEIQAAFNLTAYFFNKYILIKKKLPITRELLLKSILEYSF</sequence>
<protein>
    <recommendedName>
        <fullName evidence="1">DNA repair protein RecO</fullName>
    </recommendedName>
    <alternativeName>
        <fullName evidence="1">Recombination protein O</fullName>
    </alternativeName>
</protein>
<keyword id="KW-0227">DNA damage</keyword>
<keyword id="KW-0233">DNA recombination</keyword>
<keyword id="KW-0234">DNA repair</keyword>
<feature type="chain" id="PRO_1000193403" description="DNA repair protein RecO">
    <location>
        <begin position="1"/>
        <end position="241"/>
    </location>
</feature>
<dbReference type="EMBL" id="AP008981">
    <property type="protein sequence ID" value="BAG40634.1"/>
    <property type="molecule type" value="Genomic_DNA"/>
</dbReference>
<dbReference type="RefSeq" id="WP_012461703.1">
    <property type="nucleotide sequence ID" value="NC_010793.1"/>
</dbReference>
<dbReference type="SMR" id="B3CTD7"/>
<dbReference type="KEGG" id="ott:OTT_1176"/>
<dbReference type="HOGENOM" id="CLU_086029_0_0_5"/>
<dbReference type="OrthoDB" id="9804792at2"/>
<dbReference type="Proteomes" id="UP000001033">
    <property type="component" value="Chromosome"/>
</dbReference>
<dbReference type="GO" id="GO:0043590">
    <property type="term" value="C:bacterial nucleoid"/>
    <property type="evidence" value="ECO:0007669"/>
    <property type="project" value="TreeGrafter"/>
</dbReference>
<dbReference type="GO" id="GO:0006310">
    <property type="term" value="P:DNA recombination"/>
    <property type="evidence" value="ECO:0007669"/>
    <property type="project" value="UniProtKB-UniRule"/>
</dbReference>
<dbReference type="GO" id="GO:0006302">
    <property type="term" value="P:double-strand break repair"/>
    <property type="evidence" value="ECO:0007669"/>
    <property type="project" value="TreeGrafter"/>
</dbReference>
<dbReference type="Gene3D" id="2.40.50.140">
    <property type="entry name" value="Nucleic acid-binding proteins"/>
    <property type="match status" value="1"/>
</dbReference>
<dbReference type="Gene3D" id="1.20.1440.120">
    <property type="entry name" value="Recombination protein O, C-terminal domain"/>
    <property type="match status" value="1"/>
</dbReference>
<dbReference type="HAMAP" id="MF_00201">
    <property type="entry name" value="RecO"/>
    <property type="match status" value="1"/>
</dbReference>
<dbReference type="InterPro" id="IPR037278">
    <property type="entry name" value="ARFGAP/RecO"/>
</dbReference>
<dbReference type="InterPro" id="IPR022572">
    <property type="entry name" value="DNA_rep/recomb_RecO_N"/>
</dbReference>
<dbReference type="InterPro" id="IPR012340">
    <property type="entry name" value="NA-bd_OB-fold"/>
</dbReference>
<dbReference type="InterPro" id="IPR003717">
    <property type="entry name" value="RecO"/>
</dbReference>
<dbReference type="InterPro" id="IPR042242">
    <property type="entry name" value="RecO_C"/>
</dbReference>
<dbReference type="NCBIfam" id="TIGR00613">
    <property type="entry name" value="reco"/>
    <property type="match status" value="1"/>
</dbReference>
<dbReference type="PANTHER" id="PTHR33991">
    <property type="entry name" value="DNA REPAIR PROTEIN RECO"/>
    <property type="match status" value="1"/>
</dbReference>
<dbReference type="PANTHER" id="PTHR33991:SF1">
    <property type="entry name" value="DNA REPAIR PROTEIN RECO"/>
    <property type="match status" value="1"/>
</dbReference>
<dbReference type="Pfam" id="PF02565">
    <property type="entry name" value="RecO_C"/>
    <property type="match status" value="1"/>
</dbReference>
<dbReference type="Pfam" id="PF11967">
    <property type="entry name" value="RecO_N"/>
    <property type="match status" value="1"/>
</dbReference>
<dbReference type="SUPFAM" id="SSF57863">
    <property type="entry name" value="ArfGap/RecO-like zinc finger"/>
    <property type="match status" value="1"/>
</dbReference>
<dbReference type="SUPFAM" id="SSF50249">
    <property type="entry name" value="Nucleic acid-binding proteins"/>
    <property type="match status" value="1"/>
</dbReference>
<organism>
    <name type="scientific">Orientia tsutsugamushi (strain Ikeda)</name>
    <name type="common">Rickettsia tsutsugamushi</name>
    <dbReference type="NCBI Taxonomy" id="334380"/>
    <lineage>
        <taxon>Bacteria</taxon>
        <taxon>Pseudomonadati</taxon>
        <taxon>Pseudomonadota</taxon>
        <taxon>Alphaproteobacteria</taxon>
        <taxon>Rickettsiales</taxon>
        <taxon>Rickettsiaceae</taxon>
        <taxon>Rickettsieae</taxon>
        <taxon>Orientia</taxon>
    </lineage>
</organism>
<evidence type="ECO:0000255" key="1">
    <source>
        <dbReference type="HAMAP-Rule" id="MF_00201"/>
    </source>
</evidence>